<accession>A8FEB9</accession>
<organism>
    <name type="scientific">Bacillus pumilus (strain SAFR-032)</name>
    <dbReference type="NCBI Taxonomy" id="315750"/>
    <lineage>
        <taxon>Bacteria</taxon>
        <taxon>Bacillati</taxon>
        <taxon>Bacillota</taxon>
        <taxon>Bacilli</taxon>
        <taxon>Bacillales</taxon>
        <taxon>Bacillaceae</taxon>
        <taxon>Bacillus</taxon>
    </lineage>
</organism>
<evidence type="ECO:0000255" key="1">
    <source>
        <dbReference type="HAMAP-Rule" id="MF_00008"/>
    </source>
</evidence>
<proteinExistence type="inferred from homology"/>
<feature type="chain" id="PRO_1000057058" description="Thymidylate synthase">
    <location>
        <begin position="1"/>
        <end position="264"/>
    </location>
</feature>
<feature type="active site" description="Nucleophile" evidence="1">
    <location>
        <position position="146"/>
    </location>
</feature>
<feature type="binding site" description="in other chain" evidence="1">
    <location>
        <position position="21"/>
    </location>
    <ligand>
        <name>dUMP</name>
        <dbReference type="ChEBI" id="CHEBI:246422"/>
        <note>ligand shared between dimeric partners</note>
    </ligand>
</feature>
<feature type="binding site" evidence="1">
    <location>
        <position position="51"/>
    </location>
    <ligand>
        <name>(6R)-5,10-methylene-5,6,7,8-tetrahydrofolate</name>
        <dbReference type="ChEBI" id="CHEBI:15636"/>
    </ligand>
</feature>
<feature type="binding site" evidence="1">
    <location>
        <begin position="126"/>
        <end position="127"/>
    </location>
    <ligand>
        <name>dUMP</name>
        <dbReference type="ChEBI" id="CHEBI:246422"/>
        <note>ligand shared between dimeric partners</note>
    </ligand>
</feature>
<feature type="binding site" description="in other chain" evidence="1">
    <location>
        <begin position="166"/>
        <end position="169"/>
    </location>
    <ligand>
        <name>dUMP</name>
        <dbReference type="ChEBI" id="CHEBI:246422"/>
        <note>ligand shared between dimeric partners</note>
    </ligand>
</feature>
<feature type="binding site" evidence="1">
    <location>
        <position position="169"/>
    </location>
    <ligand>
        <name>(6R)-5,10-methylene-5,6,7,8-tetrahydrofolate</name>
        <dbReference type="ChEBI" id="CHEBI:15636"/>
    </ligand>
</feature>
<feature type="binding site" description="in other chain" evidence="1">
    <location>
        <position position="177"/>
    </location>
    <ligand>
        <name>dUMP</name>
        <dbReference type="ChEBI" id="CHEBI:246422"/>
        <note>ligand shared between dimeric partners</note>
    </ligand>
</feature>
<feature type="binding site" description="in other chain" evidence="1">
    <location>
        <begin position="207"/>
        <end position="209"/>
    </location>
    <ligand>
        <name>dUMP</name>
        <dbReference type="ChEBI" id="CHEBI:246422"/>
        <note>ligand shared between dimeric partners</note>
    </ligand>
</feature>
<feature type="binding site" evidence="1">
    <location>
        <position position="263"/>
    </location>
    <ligand>
        <name>(6R)-5,10-methylene-5,6,7,8-tetrahydrofolate</name>
        <dbReference type="ChEBI" id="CHEBI:15636"/>
    </ligand>
</feature>
<protein>
    <recommendedName>
        <fullName evidence="1">Thymidylate synthase</fullName>
        <shortName evidence="1">TS</shortName>
        <shortName evidence="1">TSase</shortName>
        <ecNumber evidence="1">2.1.1.45</ecNumber>
    </recommendedName>
</protein>
<sequence>MKQYKELCRHVLQHGDEKGDRTGTGTISTFGYQMRFDLQEGFPLLTTKKLHLKSIIHELLWFLKGDTNVKYLQENGVRIWNEWADENGELGRVYGAQWRSWASGDGETVDQITKLIHDIEHNPNSRRLIVSAWNPGEIDQMALPPCHCLFQFYVSNGKLSCQLYQRSADIFLGVPFNIASYALLTMMIAKVTNLEPGEFVHTLGDAHIYQNHLPQVNMQLEREERALPQLRITRDVKSIFDFTFDDFVLENYDPHPHIKGEVSV</sequence>
<comment type="function">
    <text evidence="1">Catalyzes the reductive methylation of 2'-deoxyuridine-5'-monophosphate (dUMP) to 2'-deoxythymidine-5'-monophosphate (dTMP) while utilizing 5,10-methylenetetrahydrofolate (mTHF) as the methyl donor and reductant in the reaction, yielding dihydrofolate (DHF) as a by-product. This enzymatic reaction provides an intracellular de novo source of dTMP, an essential precursor for DNA biosynthesis.</text>
</comment>
<comment type="catalytic activity">
    <reaction evidence="1">
        <text>dUMP + (6R)-5,10-methylene-5,6,7,8-tetrahydrofolate = 7,8-dihydrofolate + dTMP</text>
        <dbReference type="Rhea" id="RHEA:12104"/>
        <dbReference type="ChEBI" id="CHEBI:15636"/>
        <dbReference type="ChEBI" id="CHEBI:57451"/>
        <dbReference type="ChEBI" id="CHEBI:63528"/>
        <dbReference type="ChEBI" id="CHEBI:246422"/>
        <dbReference type="EC" id="2.1.1.45"/>
    </reaction>
</comment>
<comment type="pathway">
    <text evidence="1">Pyrimidine metabolism; dTTP biosynthesis.</text>
</comment>
<comment type="subunit">
    <text evidence="1">Homodimer.</text>
</comment>
<comment type="subcellular location">
    <subcellularLocation>
        <location evidence="1">Cytoplasm</location>
    </subcellularLocation>
</comment>
<comment type="similarity">
    <text evidence="1">Belongs to the thymidylate synthase family. Bacterial-type ThyA subfamily.</text>
</comment>
<name>TYSY_BACP2</name>
<gene>
    <name evidence="1" type="primary">thyA</name>
    <name type="ordered locus">BPUM_1916</name>
</gene>
<reference key="1">
    <citation type="journal article" date="2007" name="PLoS ONE">
        <title>Paradoxical DNA repair and peroxide resistance gene conservation in Bacillus pumilus SAFR-032.</title>
        <authorList>
            <person name="Gioia J."/>
            <person name="Yerrapragada S."/>
            <person name="Qin X."/>
            <person name="Jiang H."/>
            <person name="Igboeli O.C."/>
            <person name="Muzny D."/>
            <person name="Dugan-Rocha S."/>
            <person name="Ding Y."/>
            <person name="Hawes A."/>
            <person name="Liu W."/>
            <person name="Perez L."/>
            <person name="Kovar C."/>
            <person name="Dinh H."/>
            <person name="Lee S."/>
            <person name="Nazareth L."/>
            <person name="Blyth P."/>
            <person name="Holder M."/>
            <person name="Buhay C."/>
            <person name="Tirumalai M.R."/>
            <person name="Liu Y."/>
            <person name="Dasgupta I."/>
            <person name="Bokhetache L."/>
            <person name="Fujita M."/>
            <person name="Karouia F."/>
            <person name="Eswara Moorthy P."/>
            <person name="Siefert J."/>
            <person name="Uzman A."/>
            <person name="Buzumbo P."/>
            <person name="Verma A."/>
            <person name="Zwiya H."/>
            <person name="McWilliams B.D."/>
            <person name="Olowu A."/>
            <person name="Clinkenbeard K.D."/>
            <person name="Newcombe D."/>
            <person name="Golebiewski L."/>
            <person name="Petrosino J.F."/>
            <person name="Nicholson W.L."/>
            <person name="Fox G.E."/>
            <person name="Venkateswaran K."/>
            <person name="Highlander S.K."/>
            <person name="Weinstock G.M."/>
        </authorList>
    </citation>
    <scope>NUCLEOTIDE SEQUENCE [LARGE SCALE GENOMIC DNA]</scope>
    <source>
        <strain>SAFR-032</strain>
    </source>
</reference>
<dbReference type="EC" id="2.1.1.45" evidence="1"/>
<dbReference type="EMBL" id="CP000813">
    <property type="protein sequence ID" value="ABV62586.1"/>
    <property type="molecule type" value="Genomic_DNA"/>
</dbReference>
<dbReference type="RefSeq" id="WP_012010306.1">
    <property type="nucleotide sequence ID" value="NZ_VEIS01000001.1"/>
</dbReference>
<dbReference type="SMR" id="A8FEB9"/>
<dbReference type="STRING" id="315750.BPUM_1916"/>
<dbReference type="GeneID" id="5621180"/>
<dbReference type="KEGG" id="bpu:BPUM_1916"/>
<dbReference type="eggNOG" id="COG0207">
    <property type="taxonomic scope" value="Bacteria"/>
</dbReference>
<dbReference type="HOGENOM" id="CLU_021669_0_0_9"/>
<dbReference type="OrthoDB" id="9774633at2"/>
<dbReference type="UniPathway" id="UPA00575"/>
<dbReference type="Proteomes" id="UP000001355">
    <property type="component" value="Chromosome"/>
</dbReference>
<dbReference type="GO" id="GO:0005829">
    <property type="term" value="C:cytosol"/>
    <property type="evidence" value="ECO:0007669"/>
    <property type="project" value="TreeGrafter"/>
</dbReference>
<dbReference type="GO" id="GO:0004799">
    <property type="term" value="F:thymidylate synthase activity"/>
    <property type="evidence" value="ECO:0007669"/>
    <property type="project" value="UniProtKB-UniRule"/>
</dbReference>
<dbReference type="GO" id="GO:0006231">
    <property type="term" value="P:dTMP biosynthetic process"/>
    <property type="evidence" value="ECO:0007669"/>
    <property type="project" value="UniProtKB-UniRule"/>
</dbReference>
<dbReference type="GO" id="GO:0006235">
    <property type="term" value="P:dTTP biosynthetic process"/>
    <property type="evidence" value="ECO:0007669"/>
    <property type="project" value="UniProtKB-UniRule"/>
</dbReference>
<dbReference type="GO" id="GO:0032259">
    <property type="term" value="P:methylation"/>
    <property type="evidence" value="ECO:0007669"/>
    <property type="project" value="UniProtKB-KW"/>
</dbReference>
<dbReference type="CDD" id="cd00351">
    <property type="entry name" value="TS_Pyrimidine_HMase"/>
    <property type="match status" value="1"/>
</dbReference>
<dbReference type="FunFam" id="3.30.572.10:FF:000001">
    <property type="entry name" value="Thymidylate synthase"/>
    <property type="match status" value="1"/>
</dbReference>
<dbReference type="Gene3D" id="3.30.572.10">
    <property type="entry name" value="Thymidylate synthase/dCMP hydroxymethylase domain"/>
    <property type="match status" value="1"/>
</dbReference>
<dbReference type="HAMAP" id="MF_00008">
    <property type="entry name" value="Thymidy_synth_bact"/>
    <property type="match status" value="1"/>
</dbReference>
<dbReference type="InterPro" id="IPR045097">
    <property type="entry name" value="Thymidate_synth/dCMP_Mease"/>
</dbReference>
<dbReference type="InterPro" id="IPR023451">
    <property type="entry name" value="Thymidate_synth/dCMP_Mease_dom"/>
</dbReference>
<dbReference type="InterPro" id="IPR036926">
    <property type="entry name" value="Thymidate_synth/dCMP_Mease_sf"/>
</dbReference>
<dbReference type="InterPro" id="IPR000398">
    <property type="entry name" value="Thymidylate_synthase"/>
</dbReference>
<dbReference type="InterPro" id="IPR020940">
    <property type="entry name" value="Thymidylate_synthase_AS"/>
</dbReference>
<dbReference type="NCBIfam" id="NF002497">
    <property type="entry name" value="PRK01827.1-3"/>
    <property type="match status" value="1"/>
</dbReference>
<dbReference type="NCBIfam" id="NF002499">
    <property type="entry name" value="PRK01827.1-5"/>
    <property type="match status" value="1"/>
</dbReference>
<dbReference type="NCBIfam" id="TIGR03284">
    <property type="entry name" value="thym_sym"/>
    <property type="match status" value="2"/>
</dbReference>
<dbReference type="PANTHER" id="PTHR11548:SF9">
    <property type="entry name" value="THYMIDYLATE SYNTHASE"/>
    <property type="match status" value="1"/>
</dbReference>
<dbReference type="PANTHER" id="PTHR11548">
    <property type="entry name" value="THYMIDYLATE SYNTHASE 1"/>
    <property type="match status" value="1"/>
</dbReference>
<dbReference type="Pfam" id="PF00303">
    <property type="entry name" value="Thymidylat_synt"/>
    <property type="match status" value="1"/>
</dbReference>
<dbReference type="PRINTS" id="PR00108">
    <property type="entry name" value="THYMDSNTHASE"/>
</dbReference>
<dbReference type="SUPFAM" id="SSF55831">
    <property type="entry name" value="Thymidylate synthase/dCMP hydroxymethylase"/>
    <property type="match status" value="1"/>
</dbReference>
<dbReference type="PROSITE" id="PS00091">
    <property type="entry name" value="THYMIDYLATE_SYNTHASE"/>
    <property type="match status" value="1"/>
</dbReference>
<keyword id="KW-0963">Cytoplasm</keyword>
<keyword id="KW-0489">Methyltransferase</keyword>
<keyword id="KW-0545">Nucleotide biosynthesis</keyword>
<keyword id="KW-0808">Transferase</keyword>